<proteinExistence type="evidence at protein level"/>
<keyword id="KW-0007">Acetylation</keyword>
<keyword id="KW-0903">Direct protein sequencing</keyword>
<keyword id="KW-0349">Heme</keyword>
<keyword id="KW-0408">Iron</keyword>
<keyword id="KW-0479">Metal-binding</keyword>
<keyword id="KW-0561">Oxygen transport</keyword>
<keyword id="KW-0597">Phosphoprotein</keyword>
<keyword id="KW-0702">S-nitrosylation</keyword>
<keyword id="KW-0813">Transport</keyword>
<protein>
    <recommendedName>
        <fullName>Hemoglobin subunit beta</fullName>
    </recommendedName>
    <alternativeName>
        <fullName>Beta-globin</fullName>
    </alternativeName>
    <alternativeName>
        <fullName>Hemoglobin beta chain</fullName>
    </alternativeName>
</protein>
<sequence length="147" mass="16196">MVNLSGDEKNAVHGLWSKVKVDEVGGEALGRLLVVYPWTRRFFESFGDLSTADAVMNNPKVKAHGSKVLNSFGDGLSHLDNLKGTYAKLSELHCDKLHVDPENFRLLGNVLVVVLARHFGKEFTPDLQAAYQKVVAGVANALAHRYH</sequence>
<dbReference type="PIR" id="A91677">
    <property type="entry name" value="HBLL"/>
</dbReference>
<dbReference type="SMR" id="P68226"/>
<dbReference type="PeptideAtlas" id="P68226"/>
<dbReference type="GO" id="GO:0072562">
    <property type="term" value="C:blood microparticle"/>
    <property type="evidence" value="ECO:0007669"/>
    <property type="project" value="TreeGrafter"/>
</dbReference>
<dbReference type="GO" id="GO:0031838">
    <property type="term" value="C:haptoglobin-hemoglobin complex"/>
    <property type="evidence" value="ECO:0007669"/>
    <property type="project" value="TreeGrafter"/>
</dbReference>
<dbReference type="GO" id="GO:0005833">
    <property type="term" value="C:hemoglobin complex"/>
    <property type="evidence" value="ECO:0007669"/>
    <property type="project" value="InterPro"/>
</dbReference>
<dbReference type="GO" id="GO:0031720">
    <property type="term" value="F:haptoglobin binding"/>
    <property type="evidence" value="ECO:0007669"/>
    <property type="project" value="TreeGrafter"/>
</dbReference>
<dbReference type="GO" id="GO:0020037">
    <property type="term" value="F:heme binding"/>
    <property type="evidence" value="ECO:0007669"/>
    <property type="project" value="InterPro"/>
</dbReference>
<dbReference type="GO" id="GO:0031721">
    <property type="term" value="F:hemoglobin alpha binding"/>
    <property type="evidence" value="ECO:0007669"/>
    <property type="project" value="TreeGrafter"/>
</dbReference>
<dbReference type="GO" id="GO:0046872">
    <property type="term" value="F:metal ion binding"/>
    <property type="evidence" value="ECO:0007669"/>
    <property type="project" value="UniProtKB-KW"/>
</dbReference>
<dbReference type="GO" id="GO:0043177">
    <property type="term" value="F:organic acid binding"/>
    <property type="evidence" value="ECO:0007669"/>
    <property type="project" value="TreeGrafter"/>
</dbReference>
<dbReference type="GO" id="GO:0019825">
    <property type="term" value="F:oxygen binding"/>
    <property type="evidence" value="ECO:0007669"/>
    <property type="project" value="InterPro"/>
</dbReference>
<dbReference type="GO" id="GO:0005344">
    <property type="term" value="F:oxygen carrier activity"/>
    <property type="evidence" value="ECO:0007669"/>
    <property type="project" value="UniProtKB-KW"/>
</dbReference>
<dbReference type="GO" id="GO:0004601">
    <property type="term" value="F:peroxidase activity"/>
    <property type="evidence" value="ECO:0007669"/>
    <property type="project" value="TreeGrafter"/>
</dbReference>
<dbReference type="GO" id="GO:0042744">
    <property type="term" value="P:hydrogen peroxide catabolic process"/>
    <property type="evidence" value="ECO:0007669"/>
    <property type="project" value="TreeGrafter"/>
</dbReference>
<dbReference type="CDD" id="cd08925">
    <property type="entry name" value="Hb-beta-like"/>
    <property type="match status" value="1"/>
</dbReference>
<dbReference type="FunFam" id="1.10.490.10:FF:000001">
    <property type="entry name" value="Hemoglobin subunit beta"/>
    <property type="match status" value="1"/>
</dbReference>
<dbReference type="Gene3D" id="1.10.490.10">
    <property type="entry name" value="Globins"/>
    <property type="match status" value="1"/>
</dbReference>
<dbReference type="InterPro" id="IPR000971">
    <property type="entry name" value="Globin"/>
</dbReference>
<dbReference type="InterPro" id="IPR009050">
    <property type="entry name" value="Globin-like_sf"/>
</dbReference>
<dbReference type="InterPro" id="IPR012292">
    <property type="entry name" value="Globin/Proto"/>
</dbReference>
<dbReference type="InterPro" id="IPR002337">
    <property type="entry name" value="Hemoglobin_b"/>
</dbReference>
<dbReference type="InterPro" id="IPR050056">
    <property type="entry name" value="Hemoglobin_oxygen_transport"/>
</dbReference>
<dbReference type="PANTHER" id="PTHR11442">
    <property type="entry name" value="HEMOGLOBIN FAMILY MEMBER"/>
    <property type="match status" value="1"/>
</dbReference>
<dbReference type="PANTHER" id="PTHR11442:SF42">
    <property type="entry name" value="HEMOGLOBIN SUBUNIT BETA"/>
    <property type="match status" value="1"/>
</dbReference>
<dbReference type="Pfam" id="PF00042">
    <property type="entry name" value="Globin"/>
    <property type="match status" value="1"/>
</dbReference>
<dbReference type="PRINTS" id="PR00814">
    <property type="entry name" value="BETAHAEM"/>
</dbReference>
<dbReference type="SUPFAM" id="SSF46458">
    <property type="entry name" value="Globin-like"/>
    <property type="match status" value="1"/>
</dbReference>
<dbReference type="PROSITE" id="PS01033">
    <property type="entry name" value="GLOBIN"/>
    <property type="match status" value="1"/>
</dbReference>
<organism>
    <name type="scientific">Lama glama</name>
    <name type="common">Llama</name>
    <dbReference type="NCBI Taxonomy" id="9844"/>
    <lineage>
        <taxon>Eukaryota</taxon>
        <taxon>Metazoa</taxon>
        <taxon>Chordata</taxon>
        <taxon>Craniata</taxon>
        <taxon>Vertebrata</taxon>
        <taxon>Euteleostomi</taxon>
        <taxon>Mammalia</taxon>
        <taxon>Eutheria</taxon>
        <taxon>Laurasiatheria</taxon>
        <taxon>Artiodactyla</taxon>
        <taxon>Tylopoda</taxon>
        <taxon>Camelidae</taxon>
        <taxon>Lama</taxon>
    </lineage>
</organism>
<reference key="1">
    <citation type="journal article" date="1977" name="Hoppe-Seyler's Z. Physiol. Chem.">
        <title>Regulation of respiration at high altitudes and its molecular interpretation: the sequence of beta-chains of hemoglobins from pig and llama.</title>
        <authorList>
            <person name="Braunitzer G."/>
            <person name="Schrank B."/>
            <person name="Stangl A."/>
            <person name="Bauer C."/>
        </authorList>
    </citation>
    <scope>PROTEIN SEQUENCE OF 2-147</scope>
</reference>
<reference key="2">
    <citation type="journal article" date="1978" name="Hoppe-Seyler's Z. Physiol. Chem.">
        <title>The interaction between phosphate and protein, and the respiration of the llama, the human fetus and the horse.</title>
        <authorList>
            <person name="Braunitzer G."/>
            <person name="Schrank B."/>
            <person name="Stangl A."/>
            <person name="Bauer C."/>
        </authorList>
    </citation>
    <scope>PROTEIN SEQUENCE OF 2-147</scope>
    <scope>SEQUENCE REVISION TO 19</scope>
</reference>
<feature type="initiator methionine" description="Removed" evidence="1 2">
    <location>
        <position position="1"/>
    </location>
</feature>
<feature type="chain" id="PRO_0000052980" description="Hemoglobin subunit beta">
    <location>
        <begin position="2"/>
        <end position="147"/>
    </location>
</feature>
<feature type="domain" description="Globin" evidence="4">
    <location>
        <begin position="3"/>
        <end position="147"/>
    </location>
</feature>
<feature type="binding site" description="distal binding residue">
    <location>
        <position position="64"/>
    </location>
    <ligand>
        <name>heme b</name>
        <dbReference type="ChEBI" id="CHEBI:60344"/>
    </ligand>
    <ligandPart>
        <name>Fe</name>
        <dbReference type="ChEBI" id="CHEBI:18248"/>
    </ligandPart>
</feature>
<feature type="binding site" description="proximal binding residue">
    <location>
        <position position="93"/>
    </location>
    <ligand>
        <name>heme b</name>
        <dbReference type="ChEBI" id="CHEBI:60344"/>
    </ligand>
    <ligandPart>
        <name>Fe</name>
        <dbReference type="ChEBI" id="CHEBI:18248"/>
    </ligandPart>
</feature>
<feature type="modified residue" description="N-acetylvaline" evidence="1">
    <location>
        <position position="2"/>
    </location>
</feature>
<feature type="modified residue" description="Phosphoserine" evidence="3">
    <location>
        <position position="45"/>
    </location>
</feature>
<feature type="modified residue" description="N6-acetyllysine" evidence="3">
    <location>
        <position position="60"/>
    </location>
</feature>
<feature type="modified residue" description="N6-acetyllysine" evidence="3">
    <location>
        <position position="83"/>
    </location>
</feature>
<feature type="modified residue" description="S-nitrosocysteine" evidence="3">
    <location>
        <position position="94"/>
    </location>
</feature>
<comment type="function">
    <text>Involved in oxygen transport from the lung to the various peripheral tissues.</text>
</comment>
<comment type="subunit">
    <text>Heterotetramer of two alpha chains and two beta chains.</text>
</comment>
<comment type="tissue specificity">
    <text>Red blood cells.</text>
</comment>
<comment type="similarity">
    <text evidence="4">Belongs to the globin family.</text>
</comment>
<name>HBB_LAMGL</name>
<gene>
    <name type="primary">HBB</name>
</gene>
<evidence type="ECO:0000250" key="1">
    <source>
        <dbReference type="UniProtKB" id="P02086"/>
    </source>
</evidence>
<evidence type="ECO:0000250" key="2">
    <source>
        <dbReference type="UniProtKB" id="P18983"/>
    </source>
</evidence>
<evidence type="ECO:0000250" key="3">
    <source>
        <dbReference type="UniProtKB" id="P68871"/>
    </source>
</evidence>
<evidence type="ECO:0000255" key="4">
    <source>
        <dbReference type="PROSITE-ProRule" id="PRU00238"/>
    </source>
</evidence>
<accession>P68226</accession>
<accession>P02068</accession>